<proteinExistence type="inferred from homology"/>
<dbReference type="EMBL" id="CP000440">
    <property type="protein sequence ID" value="ABI85657.1"/>
    <property type="molecule type" value="Genomic_DNA"/>
</dbReference>
<dbReference type="RefSeq" id="WP_006751770.1">
    <property type="nucleotide sequence ID" value="NZ_CP009798.1"/>
</dbReference>
<dbReference type="SMR" id="Q0BJL6"/>
<dbReference type="GeneID" id="93084496"/>
<dbReference type="KEGG" id="bam:Bamb_0096"/>
<dbReference type="PATRIC" id="fig|339670.21.peg.1537"/>
<dbReference type="eggNOG" id="COG0224">
    <property type="taxonomic scope" value="Bacteria"/>
</dbReference>
<dbReference type="Proteomes" id="UP000000662">
    <property type="component" value="Chromosome 1"/>
</dbReference>
<dbReference type="GO" id="GO:0005886">
    <property type="term" value="C:plasma membrane"/>
    <property type="evidence" value="ECO:0007669"/>
    <property type="project" value="UniProtKB-SubCell"/>
</dbReference>
<dbReference type="GO" id="GO:0045259">
    <property type="term" value="C:proton-transporting ATP synthase complex"/>
    <property type="evidence" value="ECO:0007669"/>
    <property type="project" value="UniProtKB-KW"/>
</dbReference>
<dbReference type="GO" id="GO:0005524">
    <property type="term" value="F:ATP binding"/>
    <property type="evidence" value="ECO:0007669"/>
    <property type="project" value="UniProtKB-UniRule"/>
</dbReference>
<dbReference type="GO" id="GO:0046933">
    <property type="term" value="F:proton-transporting ATP synthase activity, rotational mechanism"/>
    <property type="evidence" value="ECO:0007669"/>
    <property type="project" value="UniProtKB-UniRule"/>
</dbReference>
<dbReference type="GO" id="GO:0042777">
    <property type="term" value="P:proton motive force-driven plasma membrane ATP synthesis"/>
    <property type="evidence" value="ECO:0007669"/>
    <property type="project" value="UniProtKB-UniRule"/>
</dbReference>
<dbReference type="CDD" id="cd12151">
    <property type="entry name" value="F1-ATPase_gamma"/>
    <property type="match status" value="1"/>
</dbReference>
<dbReference type="FunFam" id="1.10.287.80:FF:000005">
    <property type="entry name" value="ATP synthase gamma chain"/>
    <property type="match status" value="1"/>
</dbReference>
<dbReference type="Gene3D" id="3.40.1380.10">
    <property type="match status" value="1"/>
</dbReference>
<dbReference type="Gene3D" id="1.10.287.80">
    <property type="entry name" value="ATP synthase, gamma subunit, helix hairpin domain"/>
    <property type="match status" value="1"/>
</dbReference>
<dbReference type="HAMAP" id="MF_00815">
    <property type="entry name" value="ATP_synth_gamma_bact"/>
    <property type="match status" value="1"/>
</dbReference>
<dbReference type="InterPro" id="IPR035968">
    <property type="entry name" value="ATP_synth_F1_ATPase_gsu"/>
</dbReference>
<dbReference type="InterPro" id="IPR000131">
    <property type="entry name" value="ATP_synth_F1_gsu"/>
</dbReference>
<dbReference type="InterPro" id="IPR023632">
    <property type="entry name" value="ATP_synth_F1_gsu_CS"/>
</dbReference>
<dbReference type="NCBIfam" id="TIGR01146">
    <property type="entry name" value="ATPsyn_F1gamma"/>
    <property type="match status" value="1"/>
</dbReference>
<dbReference type="NCBIfam" id="NF004144">
    <property type="entry name" value="PRK05621.1-1"/>
    <property type="match status" value="1"/>
</dbReference>
<dbReference type="PANTHER" id="PTHR11693">
    <property type="entry name" value="ATP SYNTHASE GAMMA CHAIN"/>
    <property type="match status" value="1"/>
</dbReference>
<dbReference type="PANTHER" id="PTHR11693:SF22">
    <property type="entry name" value="ATP SYNTHASE SUBUNIT GAMMA, MITOCHONDRIAL"/>
    <property type="match status" value="1"/>
</dbReference>
<dbReference type="Pfam" id="PF00231">
    <property type="entry name" value="ATP-synt"/>
    <property type="match status" value="1"/>
</dbReference>
<dbReference type="PRINTS" id="PR00126">
    <property type="entry name" value="ATPASEGAMMA"/>
</dbReference>
<dbReference type="SUPFAM" id="SSF52943">
    <property type="entry name" value="ATP synthase (F1-ATPase), gamma subunit"/>
    <property type="match status" value="1"/>
</dbReference>
<dbReference type="PROSITE" id="PS00153">
    <property type="entry name" value="ATPASE_GAMMA"/>
    <property type="match status" value="1"/>
</dbReference>
<organism>
    <name type="scientific">Burkholderia ambifaria (strain ATCC BAA-244 / DSM 16087 / CCUG 44356 / LMG 19182 / AMMD)</name>
    <name type="common">Burkholderia cepacia (strain AMMD)</name>
    <dbReference type="NCBI Taxonomy" id="339670"/>
    <lineage>
        <taxon>Bacteria</taxon>
        <taxon>Pseudomonadati</taxon>
        <taxon>Pseudomonadota</taxon>
        <taxon>Betaproteobacteria</taxon>
        <taxon>Burkholderiales</taxon>
        <taxon>Burkholderiaceae</taxon>
        <taxon>Burkholderia</taxon>
        <taxon>Burkholderia cepacia complex</taxon>
    </lineage>
</organism>
<evidence type="ECO:0000255" key="1">
    <source>
        <dbReference type="HAMAP-Rule" id="MF_00815"/>
    </source>
</evidence>
<accession>Q0BJL6</accession>
<name>ATPG_BURCM</name>
<feature type="chain" id="PRO_1000053168" description="ATP synthase gamma chain">
    <location>
        <begin position="1"/>
        <end position="291"/>
    </location>
</feature>
<sequence>MAGMKEIRGKIKSVQNTRKITKAMEMVAASKMRRAQERMRAARPYADKVRAIAAHMSRANPEYRHPFMVANDGATTAGIILVTTDKGLCGGLNTNVLRATVQKFKELEEKGQKVEATAIGSKGLGFLNRFGAKVMSQVVHLGDTPHLDKLIGAVKTQLDLYSEGKLSAVYIAYTRFVNTMKQEAVIEQLLPLSSEHFEADDGTPATSWDYIYEPDAQAVVDELLVRYVEALVYQAVAENMASEQSARMVAMKAASDNAKTVISELQLVYNKSRQAAITKELSEIVGGAAAV</sequence>
<comment type="function">
    <text evidence="1">Produces ATP from ADP in the presence of a proton gradient across the membrane. The gamma chain is believed to be important in regulating ATPase activity and the flow of protons through the CF(0) complex.</text>
</comment>
<comment type="subunit">
    <text evidence="1">F-type ATPases have 2 components, CF(1) - the catalytic core - and CF(0) - the membrane proton channel. CF(1) has five subunits: alpha(3), beta(3), gamma(1), delta(1), epsilon(1). CF(0) has three main subunits: a, b and c.</text>
</comment>
<comment type="subcellular location">
    <subcellularLocation>
        <location evidence="1">Cell inner membrane</location>
        <topology evidence="1">Peripheral membrane protein</topology>
    </subcellularLocation>
</comment>
<comment type="similarity">
    <text evidence="1">Belongs to the ATPase gamma chain family.</text>
</comment>
<protein>
    <recommendedName>
        <fullName evidence="1">ATP synthase gamma chain</fullName>
    </recommendedName>
    <alternativeName>
        <fullName evidence="1">ATP synthase F1 sector gamma subunit</fullName>
    </alternativeName>
    <alternativeName>
        <fullName evidence="1">F-ATPase gamma subunit</fullName>
    </alternativeName>
</protein>
<keyword id="KW-0066">ATP synthesis</keyword>
<keyword id="KW-0997">Cell inner membrane</keyword>
<keyword id="KW-1003">Cell membrane</keyword>
<keyword id="KW-0139">CF(1)</keyword>
<keyword id="KW-0375">Hydrogen ion transport</keyword>
<keyword id="KW-0406">Ion transport</keyword>
<keyword id="KW-0472">Membrane</keyword>
<keyword id="KW-0813">Transport</keyword>
<reference key="1">
    <citation type="submission" date="2006-08" db="EMBL/GenBank/DDBJ databases">
        <title>Complete sequence of chromosome 1 of Burkholderia cepacia AMMD.</title>
        <authorList>
            <person name="Copeland A."/>
            <person name="Lucas S."/>
            <person name="Lapidus A."/>
            <person name="Barry K."/>
            <person name="Detter J.C."/>
            <person name="Glavina del Rio T."/>
            <person name="Hammon N."/>
            <person name="Israni S."/>
            <person name="Pitluck S."/>
            <person name="Bruce D."/>
            <person name="Chain P."/>
            <person name="Malfatti S."/>
            <person name="Shin M."/>
            <person name="Vergez L."/>
            <person name="Schmutz J."/>
            <person name="Larimer F."/>
            <person name="Land M."/>
            <person name="Hauser L."/>
            <person name="Kyrpides N."/>
            <person name="Kim E."/>
            <person name="Parke J."/>
            <person name="Coenye T."/>
            <person name="Konstantinidis K."/>
            <person name="Ramette A."/>
            <person name="Tiedje J."/>
            <person name="Richardson P."/>
        </authorList>
    </citation>
    <scope>NUCLEOTIDE SEQUENCE [LARGE SCALE GENOMIC DNA]</scope>
    <source>
        <strain>ATCC BAA-244 / DSM 16087 / CCUG 44356 / LMG 19182 / AMMD</strain>
    </source>
</reference>
<gene>
    <name evidence="1" type="primary">atpG</name>
    <name type="ordered locus">Bamb_0096</name>
</gene>